<keyword id="KW-0275">Fatty acid biosynthesis</keyword>
<keyword id="KW-0276">Fatty acid metabolism</keyword>
<keyword id="KW-0285">Flavoprotein</keyword>
<keyword id="KW-0288">FMN</keyword>
<keyword id="KW-0444">Lipid biosynthesis</keyword>
<keyword id="KW-0443">Lipid metabolism</keyword>
<keyword id="KW-0521">NADP</keyword>
<keyword id="KW-0560">Oxidoreductase</keyword>
<keyword id="KW-0925">Oxylipin biosynthesis</keyword>
<keyword id="KW-1185">Reference proteome</keyword>
<organism>
    <name type="scientific">Oryza sativa subsp. japonica</name>
    <name type="common">Rice</name>
    <dbReference type="NCBI Taxonomy" id="39947"/>
    <lineage>
        <taxon>Eukaryota</taxon>
        <taxon>Viridiplantae</taxon>
        <taxon>Streptophyta</taxon>
        <taxon>Embryophyta</taxon>
        <taxon>Tracheophyta</taxon>
        <taxon>Spermatophyta</taxon>
        <taxon>Magnoliopsida</taxon>
        <taxon>Liliopsida</taxon>
        <taxon>Poales</taxon>
        <taxon>Poaceae</taxon>
        <taxon>BOP clade</taxon>
        <taxon>Oryzoideae</taxon>
        <taxon>Oryzeae</taxon>
        <taxon>Oryzinae</taxon>
        <taxon>Oryza</taxon>
        <taxon>Oryza sativa</taxon>
    </lineage>
</organism>
<comment type="function">
    <text evidence="3 6">Probably involved in the biosynthesis or metabolism of oxylipin signaling molecules. In vitro, reduces cis(-)-12-oxophytodienoic acid (cis(-)-OPDA) and to cis(-)-OPC-8:0.</text>
</comment>
<comment type="catalytic activity">
    <reaction evidence="3 6">
        <text>(1S,2S)-OPC-8 + NADP(+) = (9S,13S,15Z)-12-oxophyto-10,15-dienoate + NADPH + H(+)</text>
        <dbReference type="Rhea" id="RHEA:21888"/>
        <dbReference type="ChEBI" id="CHEBI:15378"/>
        <dbReference type="ChEBI" id="CHEBI:57411"/>
        <dbReference type="ChEBI" id="CHEBI:57783"/>
        <dbReference type="ChEBI" id="CHEBI:58349"/>
        <dbReference type="ChEBI" id="CHEBI:191855"/>
        <dbReference type="EC" id="1.3.1.42"/>
    </reaction>
    <physiologicalReaction direction="left-to-right" evidence="3 6">
        <dbReference type="Rhea" id="RHEA:21889"/>
    </physiologicalReaction>
</comment>
<comment type="cofactor">
    <cofactor evidence="1">
        <name>FMN</name>
        <dbReference type="ChEBI" id="CHEBI:58210"/>
    </cofactor>
</comment>
<comment type="pathway">
    <text evidence="3 6">Lipid metabolism; oxylipin biosynthesis.</text>
</comment>
<comment type="induction">
    <text evidence="3 4 5 7 8">By wounding, jasmonate, salicylate, salt, drought and cold stresses, sucrose, copper, cadmium, mercury, UV-C, fungal elicitor and ozone.</text>
</comment>
<comment type="similarity">
    <text evidence="11">Belongs to the NADH:flavin oxidoreductase/NADH oxidase family.</text>
</comment>
<comment type="sequence caution" evidence="11">
    <conflict type="erroneous gene model prediction">
        <sequence resource="EMBL-CDS" id="BAD35327"/>
    </conflict>
</comment>
<comment type="sequence caution" evidence="11">
    <conflict type="erroneous gene model prediction">
        <sequence resource="EMBL-CDS" id="BAD35835"/>
    </conflict>
</comment>
<comment type="sequence caution" evidence="11">
    <conflict type="erroneous initiation">
        <sequence resource="EMBL-CDS" id="CAD89605"/>
    </conflict>
    <text>Truncated N-terminus.</text>
</comment>
<protein>
    <recommendedName>
        <fullName evidence="10">12-oxophytodienoate reductase 1</fullName>
        <ecNumber evidence="3">1.3.1.42</ecNumber>
    </recommendedName>
    <alternativeName>
        <fullName evidence="10">12-oxophytodienoate-10,11-reductase 1</fullName>
        <shortName evidence="9">OPDA-reductase 1</shortName>
        <shortName evidence="9">OsOPR1</shortName>
    </alternativeName>
</protein>
<gene>
    <name evidence="9 10" type="primary">OPR1</name>
    <name type="synonym">OPDA</name>
    <name type="synonym">OPDA2</name>
    <name type="synonym">OPDAR1</name>
    <name evidence="10" type="synonym">OPR11</name>
    <name evidence="10" type="synonym">OPR2</name>
    <name evidence="9" type="synonym">RRJ4</name>
    <name type="ordered locus">Os06g0216300</name>
    <name type="ordered locus">LOC_Os06g11290</name>
    <name evidence="14" type="ORF">OsJ_20595</name>
    <name evidence="13" type="ORF">OSJNBb0024N18.13</name>
    <name evidence="12" type="ORF">P0537F07.35</name>
</gene>
<dbReference type="EC" id="1.3.1.42" evidence="3"/>
<dbReference type="EMBL" id="AJ557138">
    <property type="protein sequence ID" value="CAD89604.1"/>
    <property type="molecule type" value="mRNA"/>
</dbReference>
<dbReference type="EMBL" id="AJ557139">
    <property type="protein sequence ID" value="CAD89605.1"/>
    <property type="status" value="ALT_INIT"/>
    <property type="molecule type" value="mRNA"/>
</dbReference>
<dbReference type="EMBL" id="AB040743">
    <property type="protein sequence ID" value="BAC20139.1"/>
    <property type="molecule type" value="mRNA"/>
</dbReference>
<dbReference type="EMBL" id="AB122088">
    <property type="protein sequence ID" value="BAD26703.1"/>
    <property type="molecule type" value="Genomic_DNA"/>
</dbReference>
<dbReference type="EMBL" id="AP003525">
    <property type="protein sequence ID" value="BAD35326.1"/>
    <property type="molecule type" value="Genomic_DNA"/>
</dbReference>
<dbReference type="EMBL" id="AP003525">
    <property type="protein sequence ID" value="BAD35327.1"/>
    <property type="status" value="ALT_SEQ"/>
    <property type="molecule type" value="Genomic_DNA"/>
</dbReference>
<dbReference type="EMBL" id="AP004741">
    <property type="protein sequence ID" value="BAD35834.1"/>
    <property type="molecule type" value="Genomic_DNA"/>
</dbReference>
<dbReference type="EMBL" id="AP004741">
    <property type="protein sequence ID" value="BAD35835.1"/>
    <property type="status" value="ALT_SEQ"/>
    <property type="molecule type" value="Genomic_DNA"/>
</dbReference>
<dbReference type="EMBL" id="AP008212">
    <property type="protein sequence ID" value="BAF19059.1"/>
    <property type="molecule type" value="Genomic_DNA"/>
</dbReference>
<dbReference type="EMBL" id="AP014962">
    <property type="status" value="NOT_ANNOTATED_CDS"/>
    <property type="molecule type" value="Genomic_DNA"/>
</dbReference>
<dbReference type="EMBL" id="CM000143">
    <property type="protein sequence ID" value="EAZ36274.1"/>
    <property type="molecule type" value="Genomic_DNA"/>
</dbReference>
<dbReference type="RefSeq" id="XP_015643915.1">
    <property type="nucleotide sequence ID" value="XM_015788429.1"/>
</dbReference>
<dbReference type="SMR" id="Q84QK0"/>
<dbReference type="FunCoup" id="Q84QK0">
    <property type="interactions" value="166"/>
</dbReference>
<dbReference type="STRING" id="39947.Q84QK0"/>
<dbReference type="PaxDb" id="39947-Q84QK0"/>
<dbReference type="EnsemblPlants" id="Os06t0216300-02">
    <property type="protein sequence ID" value="Os06t0216300-02"/>
    <property type="gene ID" value="Os06g0216300"/>
</dbReference>
<dbReference type="Gramene" id="Os06t0216300-02">
    <property type="protein sequence ID" value="Os06t0216300-02"/>
    <property type="gene ID" value="Os06g0216300"/>
</dbReference>
<dbReference type="KEGG" id="dosa:Os06g0216300"/>
<dbReference type="InParanoid" id="Q84QK0"/>
<dbReference type="OrthoDB" id="1663137at2759"/>
<dbReference type="BRENDA" id="1.3.1.42">
    <property type="organism ID" value="4460"/>
</dbReference>
<dbReference type="UniPathway" id="UPA00382"/>
<dbReference type="Proteomes" id="UP000000763">
    <property type="component" value="Chromosome 6"/>
</dbReference>
<dbReference type="Proteomes" id="UP000007752">
    <property type="component" value="Chromosome 6"/>
</dbReference>
<dbReference type="Proteomes" id="UP000059680">
    <property type="component" value="Chromosome 6"/>
</dbReference>
<dbReference type="GO" id="GO:0016629">
    <property type="term" value="F:12-oxophytodienoate reductase activity"/>
    <property type="evidence" value="ECO:0000314"/>
    <property type="project" value="UniProtKB"/>
</dbReference>
<dbReference type="GO" id="GO:0010181">
    <property type="term" value="F:FMN binding"/>
    <property type="evidence" value="ECO:0007669"/>
    <property type="project" value="InterPro"/>
</dbReference>
<dbReference type="GO" id="GO:0016491">
    <property type="term" value="F:oxidoreductase activity"/>
    <property type="evidence" value="ECO:0000318"/>
    <property type="project" value="GO_Central"/>
</dbReference>
<dbReference type="GO" id="GO:0006952">
    <property type="term" value="P:defense response"/>
    <property type="evidence" value="ECO:0000304"/>
    <property type="project" value="Gramene"/>
</dbReference>
<dbReference type="GO" id="GO:0009695">
    <property type="term" value="P:jasmonic acid biosynthetic process"/>
    <property type="evidence" value="ECO:0000270"/>
    <property type="project" value="Gramene"/>
</dbReference>
<dbReference type="GO" id="GO:0031408">
    <property type="term" value="P:oxylipin biosynthetic process"/>
    <property type="evidence" value="ECO:0000314"/>
    <property type="project" value="UniProtKB"/>
</dbReference>
<dbReference type="CDD" id="cd02933">
    <property type="entry name" value="OYE_like_FMN"/>
    <property type="match status" value="1"/>
</dbReference>
<dbReference type="FunFam" id="3.20.20.70:FF:000073">
    <property type="entry name" value="12-oxophytodienoate reductase 3"/>
    <property type="match status" value="1"/>
</dbReference>
<dbReference type="Gene3D" id="3.20.20.70">
    <property type="entry name" value="Aldolase class I"/>
    <property type="match status" value="1"/>
</dbReference>
<dbReference type="InterPro" id="IPR013785">
    <property type="entry name" value="Aldolase_TIM"/>
</dbReference>
<dbReference type="InterPro" id="IPR001155">
    <property type="entry name" value="OxRdtase_FMN_N"/>
</dbReference>
<dbReference type="InterPro" id="IPR045247">
    <property type="entry name" value="Oye-like"/>
</dbReference>
<dbReference type="PANTHER" id="PTHR22893:SF44">
    <property type="entry name" value="12-OXOPHYTODIENOATE REDUCTASE 1"/>
    <property type="match status" value="1"/>
</dbReference>
<dbReference type="PANTHER" id="PTHR22893">
    <property type="entry name" value="NADH OXIDOREDUCTASE-RELATED"/>
    <property type="match status" value="1"/>
</dbReference>
<dbReference type="Pfam" id="PF00724">
    <property type="entry name" value="Oxidored_FMN"/>
    <property type="match status" value="1"/>
</dbReference>
<dbReference type="SUPFAM" id="SSF51395">
    <property type="entry name" value="FMN-linked oxidoreductases"/>
    <property type="match status" value="1"/>
</dbReference>
<feature type="chain" id="PRO_0000410707" description="12-oxophytodienoate reductase 1">
    <location>
        <begin position="1"/>
        <end position="380"/>
    </location>
</feature>
<feature type="active site" description="Proton donor" evidence="2">
    <location>
        <position position="187"/>
    </location>
</feature>
<feature type="binding site" evidence="1">
    <location>
        <begin position="35"/>
        <end position="37"/>
    </location>
    <ligand>
        <name>FMN</name>
        <dbReference type="ChEBI" id="CHEBI:58210"/>
    </ligand>
</feature>
<feature type="binding site" evidence="1">
    <location>
        <position position="68"/>
    </location>
    <ligand>
        <name>FMN</name>
        <dbReference type="ChEBI" id="CHEBI:58210"/>
    </ligand>
</feature>
<feature type="binding site" evidence="1">
    <location>
        <position position="110"/>
    </location>
    <ligand>
        <name>FMN</name>
        <dbReference type="ChEBI" id="CHEBI:58210"/>
    </ligand>
</feature>
<feature type="binding site" evidence="2">
    <location>
        <begin position="182"/>
        <end position="185"/>
    </location>
    <ligand>
        <name>substrate</name>
    </ligand>
</feature>
<feature type="binding site" evidence="1">
    <location>
        <position position="234"/>
    </location>
    <ligand>
        <name>FMN</name>
        <dbReference type="ChEBI" id="CHEBI:58210"/>
    </ligand>
</feature>
<feature type="binding site" evidence="2">
    <location>
        <position position="275"/>
    </location>
    <ligand>
        <name>substrate</name>
    </ligand>
</feature>
<feature type="binding site" evidence="1">
    <location>
        <position position="305"/>
    </location>
    <ligand>
        <name>FMN</name>
        <dbReference type="ChEBI" id="CHEBI:58210"/>
    </ligand>
</feature>
<feature type="binding site" evidence="1">
    <location>
        <begin position="326"/>
        <end position="327"/>
    </location>
    <ligand>
        <name>FMN</name>
        <dbReference type="ChEBI" id="CHEBI:58210"/>
    </ligand>
</feature>
<reference key="1">
    <citation type="journal article" date="2003" name="Biochem. Biophys. Res. Commun.">
        <title>Diverse environmental cues transiently regulate OsOPR1 of the 'octadecanoid pathway' revealing its importance in rice defense/stress and development.</title>
        <authorList>
            <person name="Agrawal G.K."/>
            <person name="Jwa N.-S."/>
            <person name="Shibato J."/>
            <person name="Han O."/>
            <person name="Iwahashi H."/>
            <person name="Rakwal R."/>
        </authorList>
    </citation>
    <scope>NUCLEOTIDE SEQUENCE [MRNA]</scope>
    <scope>INDUCTION</scope>
    <source>
        <strain>cv. Nipponbare</strain>
        <tissue>Leaf</tissue>
    </source>
</reference>
<reference key="2">
    <citation type="journal article" date="2003" name="Planta">
        <title>Cloning and characterization of a jasmonic acid-responsive gene encoding 12-oxophytodienoic acid reductase in suspension-cultured rice cells.</title>
        <authorList>
            <person name="Sobajima H."/>
            <person name="Takeda M."/>
            <person name="Sugimori M."/>
            <person name="Kobashi N."/>
            <person name="Kiribuchi K."/>
            <person name="Cho E.M."/>
            <person name="Akimoto C."/>
            <person name="Yamaguchi T."/>
            <person name="Minami E."/>
            <person name="Shibuya N."/>
            <person name="Schaller F."/>
            <person name="Weiler E.W."/>
            <person name="Yoshihara T."/>
            <person name="Nishida H."/>
            <person name="Nojiri H."/>
            <person name="Omori T."/>
            <person name="Nishiyama M."/>
            <person name="Yamane H."/>
        </authorList>
    </citation>
    <scope>NUCLEOTIDE SEQUENCE [MRNA]</scope>
    <scope>FUNCTION</scope>
    <scope>CATALYTIC ACTIVITY</scope>
    <scope>PATHWAY</scope>
    <scope>INDUCTION BY JASMONATE</scope>
    <source>
        <strain>cv. BL-1</strain>
    </source>
</reference>
<reference key="3">
    <citation type="journal article" date="2004" name="Biosci. Biotechnol. Biochem.">
        <title>cDNA microarray analysis of rice anther genes under chilling stress at the microsporogenesis stage revealed two genes with DNA transposon Castaway in the 5'-flanking region.</title>
        <authorList>
            <person name="Yamaguchi T."/>
            <person name="Nakayama K."/>
            <person name="Hayashi T."/>
            <person name="Yazaki J."/>
            <person name="Kishimoto N."/>
            <person name="Kikuchi S."/>
            <person name="Koike S."/>
        </authorList>
    </citation>
    <scope>NUCLEOTIDE SEQUENCE [GENOMIC DNA]</scope>
    <scope>INDUCTION</scope>
    <source>
        <strain>cv. Nipponbare</strain>
    </source>
</reference>
<reference key="4">
    <citation type="journal article" date="2005" name="Nature">
        <title>The map-based sequence of the rice genome.</title>
        <authorList>
            <consortium name="International rice genome sequencing project (IRGSP)"/>
        </authorList>
    </citation>
    <scope>NUCLEOTIDE SEQUENCE [LARGE SCALE GENOMIC DNA]</scope>
    <source>
        <strain>cv. Nipponbare</strain>
    </source>
</reference>
<reference key="5">
    <citation type="journal article" date="2008" name="Nucleic Acids Res.">
        <title>The rice annotation project database (RAP-DB): 2008 update.</title>
        <authorList>
            <consortium name="The rice annotation project (RAP)"/>
        </authorList>
    </citation>
    <scope>GENOME REANNOTATION</scope>
    <source>
        <strain>cv. Nipponbare</strain>
    </source>
</reference>
<reference key="6">
    <citation type="journal article" date="2013" name="Rice">
        <title>Improvement of the Oryza sativa Nipponbare reference genome using next generation sequence and optical map data.</title>
        <authorList>
            <person name="Kawahara Y."/>
            <person name="de la Bastide M."/>
            <person name="Hamilton J.P."/>
            <person name="Kanamori H."/>
            <person name="McCombie W.R."/>
            <person name="Ouyang S."/>
            <person name="Schwartz D.C."/>
            <person name="Tanaka T."/>
            <person name="Wu J."/>
            <person name="Zhou S."/>
            <person name="Childs K.L."/>
            <person name="Davidson R.M."/>
            <person name="Lin H."/>
            <person name="Quesada-Ocampo L."/>
            <person name="Vaillancourt B."/>
            <person name="Sakai H."/>
            <person name="Lee S.S."/>
            <person name="Kim J."/>
            <person name="Numa H."/>
            <person name="Itoh T."/>
            <person name="Buell C.R."/>
            <person name="Matsumoto T."/>
        </authorList>
    </citation>
    <scope>GENOME REANNOTATION</scope>
    <source>
        <strain>cv. Nipponbare</strain>
    </source>
</reference>
<reference key="7">
    <citation type="journal article" date="2005" name="PLoS Biol.">
        <title>The genomes of Oryza sativa: a history of duplications.</title>
        <authorList>
            <person name="Yu J."/>
            <person name="Wang J."/>
            <person name="Lin W."/>
            <person name="Li S."/>
            <person name="Li H."/>
            <person name="Zhou J."/>
            <person name="Ni P."/>
            <person name="Dong W."/>
            <person name="Hu S."/>
            <person name="Zeng C."/>
            <person name="Zhang J."/>
            <person name="Zhang Y."/>
            <person name="Li R."/>
            <person name="Xu Z."/>
            <person name="Li S."/>
            <person name="Li X."/>
            <person name="Zheng H."/>
            <person name="Cong L."/>
            <person name="Lin L."/>
            <person name="Yin J."/>
            <person name="Geng J."/>
            <person name="Li G."/>
            <person name="Shi J."/>
            <person name="Liu J."/>
            <person name="Lv H."/>
            <person name="Li J."/>
            <person name="Wang J."/>
            <person name="Deng Y."/>
            <person name="Ran L."/>
            <person name="Shi X."/>
            <person name="Wang X."/>
            <person name="Wu Q."/>
            <person name="Li C."/>
            <person name="Ren X."/>
            <person name="Wang J."/>
            <person name="Wang X."/>
            <person name="Li D."/>
            <person name="Liu D."/>
            <person name="Zhang X."/>
            <person name="Ji Z."/>
            <person name="Zhao W."/>
            <person name="Sun Y."/>
            <person name="Zhang Z."/>
            <person name="Bao J."/>
            <person name="Han Y."/>
            <person name="Dong L."/>
            <person name="Ji J."/>
            <person name="Chen P."/>
            <person name="Wu S."/>
            <person name="Liu J."/>
            <person name="Xiao Y."/>
            <person name="Bu D."/>
            <person name="Tan J."/>
            <person name="Yang L."/>
            <person name="Ye C."/>
            <person name="Zhang J."/>
            <person name="Xu J."/>
            <person name="Zhou Y."/>
            <person name="Yu Y."/>
            <person name="Zhang B."/>
            <person name="Zhuang S."/>
            <person name="Wei H."/>
            <person name="Liu B."/>
            <person name="Lei M."/>
            <person name="Yu H."/>
            <person name="Li Y."/>
            <person name="Xu H."/>
            <person name="Wei S."/>
            <person name="He X."/>
            <person name="Fang L."/>
            <person name="Zhang Z."/>
            <person name="Zhang Y."/>
            <person name="Huang X."/>
            <person name="Su Z."/>
            <person name="Tong W."/>
            <person name="Li J."/>
            <person name="Tong Z."/>
            <person name="Li S."/>
            <person name="Ye J."/>
            <person name="Wang L."/>
            <person name="Fang L."/>
            <person name="Lei T."/>
            <person name="Chen C.-S."/>
            <person name="Chen H.-C."/>
            <person name="Xu Z."/>
            <person name="Li H."/>
            <person name="Huang H."/>
            <person name="Zhang F."/>
            <person name="Xu H."/>
            <person name="Li N."/>
            <person name="Zhao C."/>
            <person name="Li S."/>
            <person name="Dong L."/>
            <person name="Huang Y."/>
            <person name="Li L."/>
            <person name="Xi Y."/>
            <person name="Qi Q."/>
            <person name="Li W."/>
            <person name="Zhang B."/>
            <person name="Hu W."/>
            <person name="Zhang Y."/>
            <person name="Tian X."/>
            <person name="Jiao Y."/>
            <person name="Liang X."/>
            <person name="Jin J."/>
            <person name="Gao L."/>
            <person name="Zheng W."/>
            <person name="Hao B."/>
            <person name="Liu S.-M."/>
            <person name="Wang W."/>
            <person name="Yuan L."/>
            <person name="Cao M."/>
            <person name="McDermott J."/>
            <person name="Samudrala R."/>
            <person name="Wang J."/>
            <person name="Wong G.K.-S."/>
            <person name="Yang H."/>
        </authorList>
    </citation>
    <scope>NUCLEOTIDE SEQUENCE [LARGE SCALE GENOMIC DNA]</scope>
    <source>
        <strain>cv. Nipponbare</strain>
    </source>
</reference>
<reference key="8">
    <citation type="journal article" date="2007" name="Biosci. Biotechnol. Biochem.">
        <title>Identification of a jasmonic acid-responsive region in the promoter of the rice 12-oxophytodienoic acid reductase 1 gene OsOPR1.</title>
        <authorList>
            <person name="Sobajima H."/>
            <person name="Tani T."/>
            <person name="Chujo T."/>
            <person name="Okada K."/>
            <person name="Suzuki K."/>
            <person name="Mori S."/>
            <person name="Minami E."/>
            <person name="Nishiyama M."/>
            <person name="Nojiri H."/>
            <person name="Yamane H."/>
        </authorList>
    </citation>
    <scope>INDUCTION BY JASMONATE</scope>
</reference>
<reference key="9">
    <citation type="journal article" date="2008" name="Biochem. Biophys. Res. Commun.">
        <title>Resistance to Magnaporthe grisea in transgenic rice with suppressed expression of genes encoding allene oxide cyclase and phytodienoic acid reductase.</title>
        <authorList>
            <person name="Yara A."/>
            <person name="Yaeno T."/>
            <person name="Hasegawa M."/>
            <person name="Seto H."/>
            <person name="Seo S."/>
            <person name="Kusumi K."/>
            <person name="Iba K."/>
        </authorList>
    </citation>
    <scope>INDUCTION</scope>
</reference>
<reference key="10">
    <citation type="journal article" date="2008" name="Planta">
        <title>Identification of the OsOPR7 gene encoding 12-oxophytodienoate reductase involved in the biosynthesis of jasmonic acid in rice.</title>
        <authorList>
            <person name="Tani T."/>
            <person name="Sobajima H."/>
            <person name="Okada K."/>
            <person name="Chujo T."/>
            <person name="Arimura S."/>
            <person name="Tsutsumi N."/>
            <person name="Nishimura M."/>
            <person name="Seto H."/>
            <person name="Nojiri H."/>
            <person name="Yamane H."/>
        </authorList>
    </citation>
    <scope>FUNCTION</scope>
    <scope>NOMENCLATURE</scope>
    <scope>CATALYTIC ACTIVITY</scope>
    <scope>PATHWAY</scope>
    <source>
        <strain>cv. Nipponbare</strain>
    </source>
</reference>
<proteinExistence type="evidence at protein level"/>
<name>OPR1_ORYSJ</name>
<accession>Q84QK0</accession>
<accession>Q69TH2</accession>
<accession>Q84QJ9</accession>
<accession>Q8H9F1</accession>
<sequence length="380" mass="42465">MVHAPAKVAAAAAIPLLTPYKMGQLELSHRVVLAPLTRCRSYGNVPQPHAAVYYSQRATRGGLLIAEATDISPTAQGYPETPGIYTQQQIEAWKPIVDAVHRKGALFFLQIWHVGRVSTTDFQPNGQAPISSTDKQITPDDSGMVYSKPRRLRTDEIPQIIDDFRRAARNAIEAGFDGVEIHGAHGYLLEQFMKDSANDRTDEYGGSLENRCRFAVEVIDAVVAEVGAHRVGIRLSPFVDFMDCFDSDPVALGSYMVQQLNKHPGFLYCHMVEPRMAIIEGRRKIAHGLLPFRKQFNGTFIAAGGYDREEGNKVVADGYADLVAYGRLFLANPDLPRRFELDAPLNRYDRSTFYTQDPVVGYTDYPFLEEIDEESRTTYA</sequence>
<evidence type="ECO:0000250" key="1">
    <source>
        <dbReference type="UniProtKB" id="Q8LAH7"/>
    </source>
</evidence>
<evidence type="ECO:0000250" key="2">
    <source>
        <dbReference type="UniProtKB" id="Q9FUP0"/>
    </source>
</evidence>
<evidence type="ECO:0000269" key="3">
    <source>
    </source>
</evidence>
<evidence type="ECO:0000269" key="4">
    <source>
    </source>
</evidence>
<evidence type="ECO:0000269" key="5">
    <source>
    </source>
</evidence>
<evidence type="ECO:0000269" key="6">
    <source>
    </source>
</evidence>
<evidence type="ECO:0000269" key="7">
    <source>
    </source>
</evidence>
<evidence type="ECO:0000269" key="8">
    <source>
    </source>
</evidence>
<evidence type="ECO:0000303" key="9">
    <source>
    </source>
</evidence>
<evidence type="ECO:0000303" key="10">
    <source>
    </source>
</evidence>
<evidence type="ECO:0000305" key="11"/>
<evidence type="ECO:0000312" key="12">
    <source>
        <dbReference type="EMBL" id="BAD35327.1"/>
    </source>
</evidence>
<evidence type="ECO:0000312" key="13">
    <source>
        <dbReference type="EMBL" id="BAD35834.1"/>
    </source>
</evidence>
<evidence type="ECO:0000312" key="14">
    <source>
        <dbReference type="EMBL" id="EAZ36274.1"/>
    </source>
</evidence>